<accession>B3GYL9</accession>
<name>PRMA_ACTP7</name>
<feature type="chain" id="PRO_1000192569" description="Ribosomal protein L11 methyltransferase">
    <location>
        <begin position="1"/>
        <end position="293"/>
    </location>
</feature>
<feature type="binding site" evidence="1">
    <location>
        <position position="145"/>
    </location>
    <ligand>
        <name>S-adenosyl-L-methionine</name>
        <dbReference type="ChEBI" id="CHEBI:59789"/>
    </ligand>
</feature>
<feature type="binding site" evidence="1">
    <location>
        <position position="166"/>
    </location>
    <ligand>
        <name>S-adenosyl-L-methionine</name>
        <dbReference type="ChEBI" id="CHEBI:59789"/>
    </ligand>
</feature>
<feature type="binding site" evidence="1">
    <location>
        <position position="188"/>
    </location>
    <ligand>
        <name>S-adenosyl-L-methionine</name>
        <dbReference type="ChEBI" id="CHEBI:59789"/>
    </ligand>
</feature>
<feature type="binding site" evidence="1">
    <location>
        <position position="230"/>
    </location>
    <ligand>
        <name>S-adenosyl-L-methionine</name>
        <dbReference type="ChEBI" id="CHEBI:59789"/>
    </ligand>
</feature>
<sequence length="293" mass="32010">MAWVQIRLNSTDKQAEQISDFLEEIGAVSVTFMDSQDTPIFEPLPGETRLWGNTDVVGLFDAETDMKAIVEALIASRLVEADFVHKIEQIEDKDWEREWMDNFHPMQFGKRLWICPSWREVPDPNAVNVMLDPGLAFGTGTHPTTALCLQWLDSLDLTGKTVIDFGCGSGILAIAALKLGAKQAIGIDIDPQAILASGNNAEANGVADRLQLFLAKDQPQDLQADVVVANILAGPLKELAPNIITLVKPQGDLGLSGILATQAESVCEAYAPDFNLDPVVEKEEWCRITGVKK</sequence>
<comment type="function">
    <text evidence="1">Methylates ribosomal protein L11.</text>
</comment>
<comment type="catalytic activity">
    <reaction evidence="1">
        <text>L-lysyl-[protein] + 3 S-adenosyl-L-methionine = N(6),N(6),N(6)-trimethyl-L-lysyl-[protein] + 3 S-adenosyl-L-homocysteine + 3 H(+)</text>
        <dbReference type="Rhea" id="RHEA:54192"/>
        <dbReference type="Rhea" id="RHEA-COMP:9752"/>
        <dbReference type="Rhea" id="RHEA-COMP:13826"/>
        <dbReference type="ChEBI" id="CHEBI:15378"/>
        <dbReference type="ChEBI" id="CHEBI:29969"/>
        <dbReference type="ChEBI" id="CHEBI:57856"/>
        <dbReference type="ChEBI" id="CHEBI:59789"/>
        <dbReference type="ChEBI" id="CHEBI:61961"/>
    </reaction>
</comment>
<comment type="subcellular location">
    <subcellularLocation>
        <location evidence="1">Cytoplasm</location>
    </subcellularLocation>
</comment>
<comment type="similarity">
    <text evidence="1">Belongs to the methyltransferase superfamily. PrmA family.</text>
</comment>
<reference key="1">
    <citation type="submission" date="2008-06" db="EMBL/GenBank/DDBJ databases">
        <title>Genome and proteome analysis of A. pleuropneumoniae serotype 7.</title>
        <authorList>
            <person name="Linke B."/>
            <person name="Buettner F."/>
            <person name="Martinez-Arias R."/>
            <person name="Goesmann A."/>
            <person name="Baltes N."/>
            <person name="Tegetmeyer H."/>
            <person name="Singh M."/>
            <person name="Gerlach G.F."/>
        </authorList>
    </citation>
    <scope>NUCLEOTIDE SEQUENCE [LARGE SCALE GENOMIC DNA]</scope>
    <source>
        <strain>AP76</strain>
    </source>
</reference>
<proteinExistence type="inferred from homology"/>
<organism>
    <name type="scientific">Actinobacillus pleuropneumoniae serotype 7 (strain AP76)</name>
    <dbReference type="NCBI Taxonomy" id="537457"/>
    <lineage>
        <taxon>Bacteria</taxon>
        <taxon>Pseudomonadati</taxon>
        <taxon>Pseudomonadota</taxon>
        <taxon>Gammaproteobacteria</taxon>
        <taxon>Pasteurellales</taxon>
        <taxon>Pasteurellaceae</taxon>
        <taxon>Actinobacillus</taxon>
    </lineage>
</organism>
<keyword id="KW-0963">Cytoplasm</keyword>
<keyword id="KW-0489">Methyltransferase</keyword>
<keyword id="KW-0949">S-adenosyl-L-methionine</keyword>
<keyword id="KW-0808">Transferase</keyword>
<dbReference type="EC" id="2.1.1.-" evidence="1"/>
<dbReference type="EMBL" id="CP001091">
    <property type="protein sequence ID" value="ACE62250.1"/>
    <property type="molecule type" value="Genomic_DNA"/>
</dbReference>
<dbReference type="RefSeq" id="WP_012478550.1">
    <property type="nucleotide sequence ID" value="NC_010939.1"/>
</dbReference>
<dbReference type="SMR" id="B3GYL9"/>
<dbReference type="KEGG" id="apa:APP7_1598"/>
<dbReference type="HOGENOM" id="CLU_049382_4_1_6"/>
<dbReference type="Proteomes" id="UP000001226">
    <property type="component" value="Chromosome"/>
</dbReference>
<dbReference type="GO" id="GO:0005829">
    <property type="term" value="C:cytosol"/>
    <property type="evidence" value="ECO:0007669"/>
    <property type="project" value="TreeGrafter"/>
</dbReference>
<dbReference type="GO" id="GO:0016279">
    <property type="term" value="F:protein-lysine N-methyltransferase activity"/>
    <property type="evidence" value="ECO:0007669"/>
    <property type="project" value="TreeGrafter"/>
</dbReference>
<dbReference type="GO" id="GO:0032259">
    <property type="term" value="P:methylation"/>
    <property type="evidence" value="ECO:0007669"/>
    <property type="project" value="UniProtKB-KW"/>
</dbReference>
<dbReference type="CDD" id="cd02440">
    <property type="entry name" value="AdoMet_MTases"/>
    <property type="match status" value="1"/>
</dbReference>
<dbReference type="Gene3D" id="3.40.50.150">
    <property type="entry name" value="Vaccinia Virus protein VP39"/>
    <property type="match status" value="1"/>
</dbReference>
<dbReference type="HAMAP" id="MF_00735">
    <property type="entry name" value="Methyltr_PrmA"/>
    <property type="match status" value="1"/>
</dbReference>
<dbReference type="InterPro" id="IPR050078">
    <property type="entry name" value="Ribosomal_L11_MeTrfase_PrmA"/>
</dbReference>
<dbReference type="InterPro" id="IPR004498">
    <property type="entry name" value="Ribosomal_PrmA_MeTrfase"/>
</dbReference>
<dbReference type="InterPro" id="IPR029063">
    <property type="entry name" value="SAM-dependent_MTases_sf"/>
</dbReference>
<dbReference type="NCBIfam" id="TIGR00406">
    <property type="entry name" value="prmA"/>
    <property type="match status" value="1"/>
</dbReference>
<dbReference type="PANTHER" id="PTHR43648">
    <property type="entry name" value="ELECTRON TRANSFER FLAVOPROTEIN BETA SUBUNIT LYSINE METHYLTRANSFERASE"/>
    <property type="match status" value="1"/>
</dbReference>
<dbReference type="PANTHER" id="PTHR43648:SF1">
    <property type="entry name" value="ELECTRON TRANSFER FLAVOPROTEIN BETA SUBUNIT LYSINE METHYLTRANSFERASE"/>
    <property type="match status" value="1"/>
</dbReference>
<dbReference type="Pfam" id="PF06325">
    <property type="entry name" value="PrmA"/>
    <property type="match status" value="1"/>
</dbReference>
<dbReference type="PIRSF" id="PIRSF000401">
    <property type="entry name" value="RPL11_MTase"/>
    <property type="match status" value="1"/>
</dbReference>
<dbReference type="SUPFAM" id="SSF53335">
    <property type="entry name" value="S-adenosyl-L-methionine-dependent methyltransferases"/>
    <property type="match status" value="1"/>
</dbReference>
<protein>
    <recommendedName>
        <fullName evidence="1">Ribosomal protein L11 methyltransferase</fullName>
        <shortName evidence="1">L11 Mtase</shortName>
        <ecNumber evidence="1">2.1.1.-</ecNumber>
    </recommendedName>
</protein>
<evidence type="ECO:0000255" key="1">
    <source>
        <dbReference type="HAMAP-Rule" id="MF_00735"/>
    </source>
</evidence>
<gene>
    <name evidence="1" type="primary">prmA</name>
    <name type="ordered locus">APP7_1598</name>
</gene>